<keyword id="KW-0963">Cytoplasm</keyword>
<keyword id="KW-0520">NAD</keyword>
<keyword id="KW-0560">Oxidoreductase</keyword>
<keyword id="KW-1185">Reference proteome</keyword>
<protein>
    <recommendedName>
        <fullName evidence="1">2,3-diketo-L-gulonate reductase</fullName>
        <shortName evidence="1">2,3-DKG reductase</shortName>
        <ecNumber evidence="1">1.1.1.130</ecNumber>
    </recommendedName>
    <alternativeName>
        <fullName evidence="1">3-dehydro-L-gulonate 2-dehydrogenase</fullName>
    </alternativeName>
</protein>
<dbReference type="EC" id="1.1.1.130" evidence="1"/>
<dbReference type="EMBL" id="AE014075">
    <property type="protein sequence ID" value="AAN82832.1"/>
    <property type="molecule type" value="Genomic_DNA"/>
</dbReference>
<dbReference type="SMR" id="Q8FCD6"/>
<dbReference type="STRING" id="199310.c4396"/>
<dbReference type="KEGG" id="ecc:c4396"/>
<dbReference type="eggNOG" id="COG2055">
    <property type="taxonomic scope" value="Bacteria"/>
</dbReference>
<dbReference type="HOGENOM" id="CLU_040452_4_0_6"/>
<dbReference type="BioCyc" id="ECOL199310:C4396-MONOMER"/>
<dbReference type="Proteomes" id="UP000001410">
    <property type="component" value="Chromosome"/>
</dbReference>
<dbReference type="GO" id="GO:0005737">
    <property type="term" value="C:cytoplasm"/>
    <property type="evidence" value="ECO:0007669"/>
    <property type="project" value="UniProtKB-SubCell"/>
</dbReference>
<dbReference type="GO" id="GO:0047559">
    <property type="term" value="F:3-dehydro-L-gulonate 2-dehydrogenase activity"/>
    <property type="evidence" value="ECO:0007669"/>
    <property type="project" value="UniProtKB-UniRule"/>
</dbReference>
<dbReference type="GO" id="GO:0070403">
    <property type="term" value="F:NAD+ binding"/>
    <property type="evidence" value="ECO:0007669"/>
    <property type="project" value="InterPro"/>
</dbReference>
<dbReference type="Gene3D" id="1.10.1530.10">
    <property type="match status" value="1"/>
</dbReference>
<dbReference type="Gene3D" id="3.30.1370.60">
    <property type="entry name" value="Hypothetical oxidoreductase yiak, domain 2"/>
    <property type="match status" value="1"/>
</dbReference>
<dbReference type="Gene3D" id="3.30.60.50">
    <property type="entry name" value="Hypothetical oxidoreductase yiak, domain 3"/>
    <property type="match status" value="1"/>
</dbReference>
<dbReference type="HAMAP" id="MF_00820">
    <property type="entry name" value="Diketo_gul_reduc"/>
    <property type="match status" value="1"/>
</dbReference>
<dbReference type="InterPro" id="IPR023689">
    <property type="entry name" value="Diketo_gul_Rdtase"/>
</dbReference>
<dbReference type="InterPro" id="IPR043144">
    <property type="entry name" value="Mal/L-sulf/L-lact_DH-like_ah"/>
</dbReference>
<dbReference type="InterPro" id="IPR043143">
    <property type="entry name" value="Mal/L-sulf/L-lact_DH-like_NADP"/>
</dbReference>
<dbReference type="InterPro" id="IPR036111">
    <property type="entry name" value="Mal/L-sulfo/L-lacto_DH-like_sf"/>
</dbReference>
<dbReference type="InterPro" id="IPR003767">
    <property type="entry name" value="Malate/L-lactate_DH-like"/>
</dbReference>
<dbReference type="NCBIfam" id="NF009750">
    <property type="entry name" value="PRK13260.1"/>
    <property type="match status" value="1"/>
</dbReference>
<dbReference type="PANTHER" id="PTHR11091:SF3">
    <property type="entry name" value="2,3-DIKETO-L-GULONATE REDUCTASE"/>
    <property type="match status" value="1"/>
</dbReference>
<dbReference type="PANTHER" id="PTHR11091">
    <property type="entry name" value="OXIDOREDUCTASE-RELATED"/>
    <property type="match status" value="1"/>
</dbReference>
<dbReference type="Pfam" id="PF02615">
    <property type="entry name" value="Ldh_2"/>
    <property type="match status" value="1"/>
</dbReference>
<dbReference type="SUPFAM" id="SSF89733">
    <property type="entry name" value="L-sulfolactate dehydrogenase-like"/>
    <property type="match status" value="1"/>
</dbReference>
<organism>
    <name type="scientific">Escherichia coli O6:H1 (strain CFT073 / ATCC 700928 / UPEC)</name>
    <dbReference type="NCBI Taxonomy" id="199310"/>
    <lineage>
        <taxon>Bacteria</taxon>
        <taxon>Pseudomonadati</taxon>
        <taxon>Pseudomonadota</taxon>
        <taxon>Gammaproteobacteria</taxon>
        <taxon>Enterobacterales</taxon>
        <taxon>Enterobacteriaceae</taxon>
        <taxon>Escherichia</taxon>
    </lineage>
</organism>
<comment type="function">
    <text evidence="1">Catalyzes the reduction of 2,3-diketo-L-gulonate in the presence of NADH, to form 3-keto-L-gulonate.</text>
</comment>
<comment type="catalytic activity">
    <reaction evidence="1">
        <text>3-dehydro-L-gulonate + NAD(+) = 2,3-dioxo-L-gulonate + NADH + H(+)</text>
        <dbReference type="Rhea" id="RHEA:21924"/>
        <dbReference type="ChEBI" id="CHEBI:15378"/>
        <dbReference type="ChEBI" id="CHEBI:57441"/>
        <dbReference type="ChEBI" id="CHEBI:57540"/>
        <dbReference type="ChEBI" id="CHEBI:57655"/>
        <dbReference type="ChEBI" id="CHEBI:57945"/>
        <dbReference type="EC" id="1.1.1.130"/>
    </reaction>
</comment>
<comment type="catalytic activity">
    <reaction evidence="1">
        <text>3-dehydro-L-gulonate + NADP(+) = 2,3-dioxo-L-gulonate + NADPH + H(+)</text>
        <dbReference type="Rhea" id="RHEA:21928"/>
        <dbReference type="ChEBI" id="CHEBI:15378"/>
        <dbReference type="ChEBI" id="CHEBI:57441"/>
        <dbReference type="ChEBI" id="CHEBI:57655"/>
        <dbReference type="ChEBI" id="CHEBI:57783"/>
        <dbReference type="ChEBI" id="CHEBI:58349"/>
        <dbReference type="EC" id="1.1.1.130"/>
    </reaction>
</comment>
<comment type="subunit">
    <text evidence="1">Homodimer.</text>
</comment>
<comment type="subcellular location">
    <subcellularLocation>
        <location evidence="1">Cytoplasm</location>
    </subcellularLocation>
</comment>
<comment type="similarity">
    <text evidence="1">Belongs to the LDH2/MDH2 oxidoreductase family. DlgD subfamily.</text>
</comment>
<gene>
    <name evidence="1" type="primary">dlgD</name>
    <name type="ordered locus">c4396</name>
</gene>
<sequence length="332" mass="36601">MKVTFEQLKAAFNRVLISRGVDNETADACAEMFARTTESGVYSHGVNRFPRFIQQLENGDIIPDAQPKRITSLGAIEQWDAQRSIGNLTAKKMMDRAIELAADHGIGLVALRNANHWMRGGSYGWQAAEKGYIGICWTNSIAVMPPWGAKECRIGTNPLIVAIPSTPITMVDMSMSMFSYGMLEVNRLAGRQLPVDGGFDDEGNLTKEPGVIEKNRRILPMGYWKGSGMSIVLDMIATLLSDGASVAEVTEDNSDEYGISQIFIAIEVDKLIDGPTRDAKLQRIMDYVTSAERADENQAIRLPGHEFTTLLAENRRNGITVDDSVWAKIQAL</sequence>
<reference key="1">
    <citation type="journal article" date="2002" name="Proc. Natl. Acad. Sci. U.S.A.">
        <title>Extensive mosaic structure revealed by the complete genome sequence of uropathogenic Escherichia coli.</title>
        <authorList>
            <person name="Welch R.A."/>
            <person name="Burland V."/>
            <person name="Plunkett G. III"/>
            <person name="Redford P."/>
            <person name="Roesch P."/>
            <person name="Rasko D."/>
            <person name="Buckles E.L."/>
            <person name="Liou S.-R."/>
            <person name="Boutin A."/>
            <person name="Hackett J."/>
            <person name="Stroud D."/>
            <person name="Mayhew G.F."/>
            <person name="Rose D.J."/>
            <person name="Zhou S."/>
            <person name="Schwartz D.C."/>
            <person name="Perna N.T."/>
            <person name="Mobley H.L.T."/>
            <person name="Donnenberg M.S."/>
            <person name="Blattner F.R."/>
        </authorList>
    </citation>
    <scope>NUCLEOTIDE SEQUENCE [LARGE SCALE GENOMIC DNA]</scope>
    <source>
        <strain>CFT073 / ATCC 700928 / UPEC</strain>
    </source>
</reference>
<evidence type="ECO:0000255" key="1">
    <source>
        <dbReference type="HAMAP-Rule" id="MF_00820"/>
    </source>
</evidence>
<proteinExistence type="inferred from homology"/>
<accession>Q8FCD6</accession>
<feature type="chain" id="PRO_0000083831" description="2,3-diketo-L-gulonate reductase">
    <location>
        <begin position="1"/>
        <end position="332"/>
    </location>
</feature>
<feature type="active site" description="Proton donor" evidence="1">
    <location>
        <position position="44"/>
    </location>
</feature>
<feature type="binding site" evidence="1">
    <location>
        <begin position="168"/>
        <end position="174"/>
    </location>
    <ligand>
        <name>NAD(+)</name>
        <dbReference type="ChEBI" id="CHEBI:57540"/>
    </ligand>
</feature>
<feature type="binding site" evidence="1">
    <location>
        <begin position="224"/>
        <end position="225"/>
    </location>
    <ligand>
        <name>NAD(+)</name>
        <dbReference type="ChEBI" id="CHEBI:57540"/>
    </ligand>
</feature>
<feature type="binding site" evidence="1">
    <location>
        <begin position="304"/>
        <end position="306"/>
    </location>
    <ligand>
        <name>NAD(+)</name>
        <dbReference type="ChEBI" id="CHEBI:57540"/>
    </ligand>
</feature>
<name>DLGD_ECOL6</name>